<proteinExistence type="inferred from homology"/>
<dbReference type="EC" id="3.1.26.4" evidence="1"/>
<dbReference type="EMBL" id="FM200053">
    <property type="protein sequence ID" value="CAR58343.1"/>
    <property type="molecule type" value="Genomic_DNA"/>
</dbReference>
<dbReference type="RefSeq" id="WP_000569412.1">
    <property type="nucleotide sequence ID" value="NC_011147.1"/>
</dbReference>
<dbReference type="SMR" id="B5BAP0"/>
<dbReference type="KEGG" id="sek:SSPA0229"/>
<dbReference type="HOGENOM" id="CLU_036532_3_2_6"/>
<dbReference type="Proteomes" id="UP000001869">
    <property type="component" value="Chromosome"/>
</dbReference>
<dbReference type="GO" id="GO:0005737">
    <property type="term" value="C:cytoplasm"/>
    <property type="evidence" value="ECO:0007669"/>
    <property type="project" value="UniProtKB-SubCell"/>
</dbReference>
<dbReference type="GO" id="GO:0032299">
    <property type="term" value="C:ribonuclease H2 complex"/>
    <property type="evidence" value="ECO:0007669"/>
    <property type="project" value="TreeGrafter"/>
</dbReference>
<dbReference type="GO" id="GO:0030145">
    <property type="term" value="F:manganese ion binding"/>
    <property type="evidence" value="ECO:0007669"/>
    <property type="project" value="UniProtKB-UniRule"/>
</dbReference>
<dbReference type="GO" id="GO:0003723">
    <property type="term" value="F:RNA binding"/>
    <property type="evidence" value="ECO:0007669"/>
    <property type="project" value="InterPro"/>
</dbReference>
<dbReference type="GO" id="GO:0004523">
    <property type="term" value="F:RNA-DNA hybrid ribonuclease activity"/>
    <property type="evidence" value="ECO:0007669"/>
    <property type="project" value="UniProtKB-UniRule"/>
</dbReference>
<dbReference type="GO" id="GO:0043137">
    <property type="term" value="P:DNA replication, removal of RNA primer"/>
    <property type="evidence" value="ECO:0007669"/>
    <property type="project" value="TreeGrafter"/>
</dbReference>
<dbReference type="GO" id="GO:0006298">
    <property type="term" value="P:mismatch repair"/>
    <property type="evidence" value="ECO:0007669"/>
    <property type="project" value="TreeGrafter"/>
</dbReference>
<dbReference type="CDD" id="cd07182">
    <property type="entry name" value="RNase_HII_bacteria_HII_like"/>
    <property type="match status" value="1"/>
</dbReference>
<dbReference type="FunFam" id="3.30.420.10:FF:000006">
    <property type="entry name" value="Ribonuclease HII"/>
    <property type="match status" value="1"/>
</dbReference>
<dbReference type="Gene3D" id="3.30.420.10">
    <property type="entry name" value="Ribonuclease H-like superfamily/Ribonuclease H"/>
    <property type="match status" value="1"/>
</dbReference>
<dbReference type="HAMAP" id="MF_00052_B">
    <property type="entry name" value="RNase_HII_B"/>
    <property type="match status" value="1"/>
</dbReference>
<dbReference type="InterPro" id="IPR022898">
    <property type="entry name" value="RNase_HII"/>
</dbReference>
<dbReference type="InterPro" id="IPR001352">
    <property type="entry name" value="RNase_HII/HIII"/>
</dbReference>
<dbReference type="InterPro" id="IPR024567">
    <property type="entry name" value="RNase_HII/HIII_dom"/>
</dbReference>
<dbReference type="InterPro" id="IPR012337">
    <property type="entry name" value="RNaseH-like_sf"/>
</dbReference>
<dbReference type="InterPro" id="IPR036397">
    <property type="entry name" value="RNaseH_sf"/>
</dbReference>
<dbReference type="NCBIfam" id="NF000594">
    <property type="entry name" value="PRK00015.1-1"/>
    <property type="match status" value="1"/>
</dbReference>
<dbReference type="NCBIfam" id="NF000595">
    <property type="entry name" value="PRK00015.1-3"/>
    <property type="match status" value="1"/>
</dbReference>
<dbReference type="NCBIfam" id="NF000596">
    <property type="entry name" value="PRK00015.1-4"/>
    <property type="match status" value="1"/>
</dbReference>
<dbReference type="PANTHER" id="PTHR10954">
    <property type="entry name" value="RIBONUCLEASE H2 SUBUNIT A"/>
    <property type="match status" value="1"/>
</dbReference>
<dbReference type="PANTHER" id="PTHR10954:SF18">
    <property type="entry name" value="RIBONUCLEASE HII"/>
    <property type="match status" value="1"/>
</dbReference>
<dbReference type="Pfam" id="PF01351">
    <property type="entry name" value="RNase_HII"/>
    <property type="match status" value="1"/>
</dbReference>
<dbReference type="SUPFAM" id="SSF53098">
    <property type="entry name" value="Ribonuclease H-like"/>
    <property type="match status" value="1"/>
</dbReference>
<dbReference type="PROSITE" id="PS51975">
    <property type="entry name" value="RNASE_H_2"/>
    <property type="match status" value="1"/>
</dbReference>
<sequence length="198" mass="21507">MIEFVYPHTHLVAGVDEVGRGPLVGAVVTAAVILDPARPIVGLNDSKKLSEKRRLSLYDEIKEKALSWSLGRAEAHEIDELNILHATMLAMQRAVAGLHIAPEYVLIDGNRCPELPVPSMAVVKGDSRVAEISAASILAKVTRDAEMAALDIVFPQYGFAQHKGYPTAFHLEKLAQYGATAHHRRSFAPVKRALGLVS</sequence>
<evidence type="ECO:0000255" key="1">
    <source>
        <dbReference type="HAMAP-Rule" id="MF_00052"/>
    </source>
</evidence>
<evidence type="ECO:0000255" key="2">
    <source>
        <dbReference type="PROSITE-ProRule" id="PRU01319"/>
    </source>
</evidence>
<comment type="function">
    <text evidence="1">Endonuclease that specifically degrades the RNA of RNA-DNA hybrids.</text>
</comment>
<comment type="catalytic activity">
    <reaction evidence="1">
        <text>Endonucleolytic cleavage to 5'-phosphomonoester.</text>
        <dbReference type="EC" id="3.1.26.4"/>
    </reaction>
</comment>
<comment type="cofactor">
    <cofactor evidence="1">
        <name>Mn(2+)</name>
        <dbReference type="ChEBI" id="CHEBI:29035"/>
    </cofactor>
    <cofactor evidence="1">
        <name>Mg(2+)</name>
        <dbReference type="ChEBI" id="CHEBI:18420"/>
    </cofactor>
    <text evidence="1">Manganese or magnesium. Binds 1 divalent metal ion per monomer in the absence of substrate. May bind a second metal ion after substrate binding.</text>
</comment>
<comment type="subcellular location">
    <subcellularLocation>
        <location evidence="1">Cytoplasm</location>
    </subcellularLocation>
</comment>
<comment type="similarity">
    <text evidence="1">Belongs to the RNase HII family.</text>
</comment>
<keyword id="KW-0963">Cytoplasm</keyword>
<keyword id="KW-0255">Endonuclease</keyword>
<keyword id="KW-0378">Hydrolase</keyword>
<keyword id="KW-0464">Manganese</keyword>
<keyword id="KW-0479">Metal-binding</keyword>
<keyword id="KW-0540">Nuclease</keyword>
<reference key="1">
    <citation type="journal article" date="2009" name="BMC Genomics">
        <title>Pseudogene accumulation in the evolutionary histories of Salmonella enterica serovars Paratyphi A and Typhi.</title>
        <authorList>
            <person name="Holt K.E."/>
            <person name="Thomson N.R."/>
            <person name="Wain J."/>
            <person name="Langridge G.C."/>
            <person name="Hasan R."/>
            <person name="Bhutta Z.A."/>
            <person name="Quail M.A."/>
            <person name="Norbertczak H."/>
            <person name="Walker D."/>
            <person name="Simmonds M."/>
            <person name="White B."/>
            <person name="Bason N."/>
            <person name="Mungall K."/>
            <person name="Dougan G."/>
            <person name="Parkhill J."/>
        </authorList>
    </citation>
    <scope>NUCLEOTIDE SEQUENCE [LARGE SCALE GENOMIC DNA]</scope>
    <source>
        <strain>AKU_12601</strain>
    </source>
</reference>
<protein>
    <recommendedName>
        <fullName evidence="1">Ribonuclease HII</fullName>
        <shortName evidence="1">RNase HII</shortName>
        <ecNumber evidence="1">3.1.26.4</ecNumber>
    </recommendedName>
</protein>
<feature type="chain" id="PRO_1000091654" description="Ribonuclease HII">
    <location>
        <begin position="1"/>
        <end position="198"/>
    </location>
</feature>
<feature type="domain" description="RNase H type-2" evidence="2">
    <location>
        <begin position="10"/>
        <end position="198"/>
    </location>
</feature>
<feature type="binding site" evidence="1">
    <location>
        <position position="16"/>
    </location>
    <ligand>
        <name>a divalent metal cation</name>
        <dbReference type="ChEBI" id="CHEBI:60240"/>
    </ligand>
</feature>
<feature type="binding site" evidence="1">
    <location>
        <position position="17"/>
    </location>
    <ligand>
        <name>a divalent metal cation</name>
        <dbReference type="ChEBI" id="CHEBI:60240"/>
    </ligand>
</feature>
<feature type="binding site" evidence="1">
    <location>
        <position position="108"/>
    </location>
    <ligand>
        <name>a divalent metal cation</name>
        <dbReference type="ChEBI" id="CHEBI:60240"/>
    </ligand>
</feature>
<organism>
    <name type="scientific">Salmonella paratyphi A (strain AKU_12601)</name>
    <dbReference type="NCBI Taxonomy" id="554290"/>
    <lineage>
        <taxon>Bacteria</taxon>
        <taxon>Pseudomonadati</taxon>
        <taxon>Pseudomonadota</taxon>
        <taxon>Gammaproteobacteria</taxon>
        <taxon>Enterobacterales</taxon>
        <taxon>Enterobacteriaceae</taxon>
        <taxon>Salmonella</taxon>
    </lineage>
</organism>
<accession>B5BAP0</accession>
<name>RNH2_SALPK</name>
<gene>
    <name evidence="1" type="primary">rnhB</name>
    <name type="ordered locus">SSPA0229</name>
</gene>